<protein>
    <recommendedName>
        <fullName evidence="1">tRNA-2-methylthio-N(6)-dimethylallyladenosine synthase</fullName>
        <ecNumber evidence="1">2.8.4.3</ecNumber>
    </recommendedName>
    <alternativeName>
        <fullName evidence="1">(Dimethylallyl)adenosine tRNA methylthiotransferase MiaB</fullName>
    </alternativeName>
    <alternativeName>
        <fullName evidence="1">tRNA-i(6)A37 methylthiotransferase</fullName>
    </alternativeName>
</protein>
<evidence type="ECO:0000255" key="1">
    <source>
        <dbReference type="HAMAP-Rule" id="MF_01864"/>
    </source>
</evidence>
<evidence type="ECO:0000255" key="2">
    <source>
        <dbReference type="PROSITE-ProRule" id="PRU01266"/>
    </source>
</evidence>
<gene>
    <name evidence="1" type="primary">miaB</name>
    <name type="ordered locus">SeSA_A0824</name>
</gene>
<comment type="function">
    <text evidence="1">Catalyzes the methylthiolation of N6-(dimethylallyl)adenosine (i(6)A), leading to the formation of 2-methylthio-N6-(dimethylallyl)adenosine (ms(2)i(6)A) at position 37 in tRNAs that read codons beginning with uridine.</text>
</comment>
<comment type="catalytic activity">
    <reaction evidence="1">
        <text>N(6)-dimethylallyladenosine(37) in tRNA + (sulfur carrier)-SH + AH2 + 2 S-adenosyl-L-methionine = 2-methylsulfanyl-N(6)-dimethylallyladenosine(37) in tRNA + (sulfur carrier)-H + 5'-deoxyadenosine + L-methionine + A + S-adenosyl-L-homocysteine + 2 H(+)</text>
        <dbReference type="Rhea" id="RHEA:37067"/>
        <dbReference type="Rhea" id="RHEA-COMP:10375"/>
        <dbReference type="Rhea" id="RHEA-COMP:10376"/>
        <dbReference type="Rhea" id="RHEA-COMP:14737"/>
        <dbReference type="Rhea" id="RHEA-COMP:14739"/>
        <dbReference type="ChEBI" id="CHEBI:13193"/>
        <dbReference type="ChEBI" id="CHEBI:15378"/>
        <dbReference type="ChEBI" id="CHEBI:17319"/>
        <dbReference type="ChEBI" id="CHEBI:17499"/>
        <dbReference type="ChEBI" id="CHEBI:29917"/>
        <dbReference type="ChEBI" id="CHEBI:57844"/>
        <dbReference type="ChEBI" id="CHEBI:57856"/>
        <dbReference type="ChEBI" id="CHEBI:59789"/>
        <dbReference type="ChEBI" id="CHEBI:64428"/>
        <dbReference type="ChEBI" id="CHEBI:74415"/>
        <dbReference type="ChEBI" id="CHEBI:74417"/>
        <dbReference type="EC" id="2.8.4.3"/>
    </reaction>
</comment>
<comment type="cofactor">
    <cofactor evidence="1">
        <name>[4Fe-4S] cluster</name>
        <dbReference type="ChEBI" id="CHEBI:49883"/>
    </cofactor>
    <text evidence="1">Binds 2 [4Fe-4S] clusters. One cluster is coordinated with 3 cysteines and an exchangeable S-adenosyl-L-methionine.</text>
</comment>
<comment type="subunit">
    <text evidence="1">Monomer.</text>
</comment>
<comment type="subcellular location">
    <subcellularLocation>
        <location evidence="1">Cytoplasm</location>
    </subcellularLocation>
</comment>
<comment type="similarity">
    <text evidence="1">Belongs to the methylthiotransferase family. MiaB subfamily.</text>
</comment>
<dbReference type="EC" id="2.8.4.3" evidence="1"/>
<dbReference type="EMBL" id="CP001127">
    <property type="protein sequence ID" value="ACF88907.1"/>
    <property type="molecule type" value="Genomic_DNA"/>
</dbReference>
<dbReference type="RefSeq" id="WP_001519200.1">
    <property type="nucleotide sequence ID" value="NC_011094.1"/>
</dbReference>
<dbReference type="SMR" id="B4TPZ0"/>
<dbReference type="KEGG" id="sew:SeSA_A0824"/>
<dbReference type="HOGENOM" id="CLU_018697_2_0_6"/>
<dbReference type="Proteomes" id="UP000001865">
    <property type="component" value="Chromosome"/>
</dbReference>
<dbReference type="GO" id="GO:0005829">
    <property type="term" value="C:cytosol"/>
    <property type="evidence" value="ECO:0007669"/>
    <property type="project" value="TreeGrafter"/>
</dbReference>
<dbReference type="GO" id="GO:0051539">
    <property type="term" value="F:4 iron, 4 sulfur cluster binding"/>
    <property type="evidence" value="ECO:0007669"/>
    <property type="project" value="UniProtKB-UniRule"/>
</dbReference>
<dbReference type="GO" id="GO:0046872">
    <property type="term" value="F:metal ion binding"/>
    <property type="evidence" value="ECO:0007669"/>
    <property type="project" value="UniProtKB-KW"/>
</dbReference>
<dbReference type="GO" id="GO:0035597">
    <property type="term" value="F:N6-isopentenyladenosine methylthiotransferase activity"/>
    <property type="evidence" value="ECO:0007669"/>
    <property type="project" value="TreeGrafter"/>
</dbReference>
<dbReference type="CDD" id="cd01335">
    <property type="entry name" value="Radical_SAM"/>
    <property type="match status" value="1"/>
</dbReference>
<dbReference type="FunFam" id="3.40.50.12160:FF:000001">
    <property type="entry name" value="tRNA-2-methylthio-N(6)-dimethylallyladenosine synthase"/>
    <property type="match status" value="1"/>
</dbReference>
<dbReference type="FunFam" id="3.80.30.20:FF:000001">
    <property type="entry name" value="tRNA-2-methylthio-N(6)-dimethylallyladenosine synthase 2"/>
    <property type="match status" value="1"/>
</dbReference>
<dbReference type="Gene3D" id="3.40.50.12160">
    <property type="entry name" value="Methylthiotransferase, N-terminal domain"/>
    <property type="match status" value="1"/>
</dbReference>
<dbReference type="Gene3D" id="3.80.30.20">
    <property type="entry name" value="tm_1862 like domain"/>
    <property type="match status" value="1"/>
</dbReference>
<dbReference type="HAMAP" id="MF_01864">
    <property type="entry name" value="tRNA_metthiotr_MiaB"/>
    <property type="match status" value="1"/>
</dbReference>
<dbReference type="InterPro" id="IPR006638">
    <property type="entry name" value="Elp3/MiaA/NifB-like_rSAM"/>
</dbReference>
<dbReference type="InterPro" id="IPR005839">
    <property type="entry name" value="Methylthiotransferase"/>
</dbReference>
<dbReference type="InterPro" id="IPR020612">
    <property type="entry name" value="Methylthiotransferase_CS"/>
</dbReference>
<dbReference type="InterPro" id="IPR013848">
    <property type="entry name" value="Methylthiotransferase_N"/>
</dbReference>
<dbReference type="InterPro" id="IPR038135">
    <property type="entry name" value="Methylthiotransferase_N_sf"/>
</dbReference>
<dbReference type="InterPro" id="IPR006463">
    <property type="entry name" value="MiaB_methiolase"/>
</dbReference>
<dbReference type="InterPro" id="IPR007197">
    <property type="entry name" value="rSAM"/>
</dbReference>
<dbReference type="InterPro" id="IPR023404">
    <property type="entry name" value="rSAM_horseshoe"/>
</dbReference>
<dbReference type="InterPro" id="IPR002792">
    <property type="entry name" value="TRAM_dom"/>
</dbReference>
<dbReference type="NCBIfam" id="TIGR01574">
    <property type="entry name" value="miaB-methiolase"/>
    <property type="match status" value="1"/>
</dbReference>
<dbReference type="NCBIfam" id="TIGR00089">
    <property type="entry name" value="MiaB/RimO family radical SAM methylthiotransferase"/>
    <property type="match status" value="1"/>
</dbReference>
<dbReference type="PANTHER" id="PTHR43020">
    <property type="entry name" value="CDK5 REGULATORY SUBUNIT-ASSOCIATED PROTEIN 1"/>
    <property type="match status" value="1"/>
</dbReference>
<dbReference type="PANTHER" id="PTHR43020:SF2">
    <property type="entry name" value="MITOCHONDRIAL TRNA METHYLTHIOTRANSFERASE CDK5RAP1"/>
    <property type="match status" value="1"/>
</dbReference>
<dbReference type="Pfam" id="PF04055">
    <property type="entry name" value="Radical_SAM"/>
    <property type="match status" value="1"/>
</dbReference>
<dbReference type="Pfam" id="PF01938">
    <property type="entry name" value="TRAM"/>
    <property type="match status" value="1"/>
</dbReference>
<dbReference type="Pfam" id="PF00919">
    <property type="entry name" value="UPF0004"/>
    <property type="match status" value="1"/>
</dbReference>
<dbReference type="SFLD" id="SFLDF00273">
    <property type="entry name" value="(dimethylallyl)adenosine_tRNA"/>
    <property type="match status" value="1"/>
</dbReference>
<dbReference type="SFLD" id="SFLDG01082">
    <property type="entry name" value="B12-binding_domain_containing"/>
    <property type="match status" value="1"/>
</dbReference>
<dbReference type="SFLD" id="SFLDS00029">
    <property type="entry name" value="Radical_SAM"/>
    <property type="match status" value="1"/>
</dbReference>
<dbReference type="SMART" id="SM00729">
    <property type="entry name" value="Elp3"/>
    <property type="match status" value="1"/>
</dbReference>
<dbReference type="SUPFAM" id="SSF102114">
    <property type="entry name" value="Radical SAM enzymes"/>
    <property type="match status" value="1"/>
</dbReference>
<dbReference type="PROSITE" id="PS51449">
    <property type="entry name" value="MTTASE_N"/>
    <property type="match status" value="1"/>
</dbReference>
<dbReference type="PROSITE" id="PS01278">
    <property type="entry name" value="MTTASE_RADICAL"/>
    <property type="match status" value="1"/>
</dbReference>
<dbReference type="PROSITE" id="PS51918">
    <property type="entry name" value="RADICAL_SAM"/>
    <property type="match status" value="1"/>
</dbReference>
<dbReference type="PROSITE" id="PS50926">
    <property type="entry name" value="TRAM"/>
    <property type="match status" value="1"/>
</dbReference>
<keyword id="KW-0004">4Fe-4S</keyword>
<keyword id="KW-0963">Cytoplasm</keyword>
<keyword id="KW-0408">Iron</keyword>
<keyword id="KW-0411">Iron-sulfur</keyword>
<keyword id="KW-0479">Metal-binding</keyword>
<keyword id="KW-0949">S-adenosyl-L-methionine</keyword>
<keyword id="KW-0808">Transferase</keyword>
<keyword id="KW-0819">tRNA processing</keyword>
<name>MIAB_SALSV</name>
<organism>
    <name type="scientific">Salmonella schwarzengrund (strain CVM19633)</name>
    <dbReference type="NCBI Taxonomy" id="439843"/>
    <lineage>
        <taxon>Bacteria</taxon>
        <taxon>Pseudomonadati</taxon>
        <taxon>Pseudomonadota</taxon>
        <taxon>Gammaproteobacteria</taxon>
        <taxon>Enterobacterales</taxon>
        <taxon>Enterobacteriaceae</taxon>
        <taxon>Salmonella</taxon>
    </lineage>
</organism>
<sequence length="474" mass="53716">MTKKLHIKTWGCQMNEYDSSKMADLLDATHGYQLTDVAEEADVLLLNTCSIREKAQEKVFHQLGRWRLLKEKNPDLIIGVGGCVASQEGEHIRQRAHYVDIIFGPQTLHRLPEMINSVRGDRSPVVDISFPEIEKFDRLPEPRAEGPTAFVSIMEGCNKYCTYCVVPYTRGEEVSRPSDDILFEIAQLAAQGVREVNLLGQNVNAWRGENYDGTTGTFADLLRLVAAIDGIDRIRFTTSHPIEFTDDIIEVYRDTPELVSFLHLPVQSGSDRVLNLMGRTHTALEYKAIIRKLRAARPDIQISSDFIVGFPGETTDDFEKTMKLIADVNFDMSYSFIFSARPGTPAADMVDDVPEEEKKQRLYILQERINQQAMAWSRRMLGTTQRILVEGTSRKNIMELSGRTENNRVVNFEGTPEMIGKFVDVEITDVYPNSLRGKVVRTEDEMGLRVAETPESVIARTRKENELGVGFYQP</sequence>
<accession>B4TPZ0</accession>
<feature type="chain" id="PRO_0000374530" description="tRNA-2-methylthio-N(6)-dimethylallyladenosine synthase">
    <location>
        <begin position="1"/>
        <end position="474"/>
    </location>
</feature>
<feature type="domain" description="MTTase N-terminal" evidence="1">
    <location>
        <begin position="3"/>
        <end position="120"/>
    </location>
</feature>
<feature type="domain" description="Radical SAM core" evidence="2">
    <location>
        <begin position="143"/>
        <end position="375"/>
    </location>
</feature>
<feature type="domain" description="TRAM" evidence="1">
    <location>
        <begin position="378"/>
        <end position="441"/>
    </location>
</feature>
<feature type="binding site" evidence="1">
    <location>
        <position position="12"/>
    </location>
    <ligand>
        <name>[4Fe-4S] cluster</name>
        <dbReference type="ChEBI" id="CHEBI:49883"/>
        <label>1</label>
    </ligand>
</feature>
<feature type="binding site" evidence="1">
    <location>
        <position position="49"/>
    </location>
    <ligand>
        <name>[4Fe-4S] cluster</name>
        <dbReference type="ChEBI" id="CHEBI:49883"/>
        <label>1</label>
    </ligand>
</feature>
<feature type="binding site" evidence="1">
    <location>
        <position position="83"/>
    </location>
    <ligand>
        <name>[4Fe-4S] cluster</name>
        <dbReference type="ChEBI" id="CHEBI:49883"/>
        <label>1</label>
    </ligand>
</feature>
<feature type="binding site" evidence="1">
    <location>
        <position position="157"/>
    </location>
    <ligand>
        <name>[4Fe-4S] cluster</name>
        <dbReference type="ChEBI" id="CHEBI:49883"/>
        <label>2</label>
        <note>4Fe-4S-S-AdoMet</note>
    </ligand>
</feature>
<feature type="binding site" evidence="1">
    <location>
        <position position="161"/>
    </location>
    <ligand>
        <name>[4Fe-4S] cluster</name>
        <dbReference type="ChEBI" id="CHEBI:49883"/>
        <label>2</label>
        <note>4Fe-4S-S-AdoMet</note>
    </ligand>
</feature>
<feature type="binding site" evidence="1">
    <location>
        <position position="164"/>
    </location>
    <ligand>
        <name>[4Fe-4S] cluster</name>
        <dbReference type="ChEBI" id="CHEBI:49883"/>
        <label>2</label>
        <note>4Fe-4S-S-AdoMet</note>
    </ligand>
</feature>
<proteinExistence type="inferred from homology"/>
<reference key="1">
    <citation type="journal article" date="2011" name="J. Bacteriol.">
        <title>Comparative genomics of 28 Salmonella enterica isolates: evidence for CRISPR-mediated adaptive sublineage evolution.</title>
        <authorList>
            <person name="Fricke W.F."/>
            <person name="Mammel M.K."/>
            <person name="McDermott P.F."/>
            <person name="Tartera C."/>
            <person name="White D.G."/>
            <person name="Leclerc J.E."/>
            <person name="Ravel J."/>
            <person name="Cebula T.A."/>
        </authorList>
    </citation>
    <scope>NUCLEOTIDE SEQUENCE [LARGE SCALE GENOMIC DNA]</scope>
    <source>
        <strain>CVM19633</strain>
    </source>
</reference>